<gene>
    <name evidence="1" type="primary">purC</name>
    <name type="ordered locus">Spea_2464</name>
</gene>
<feature type="chain" id="PRO_1000117850" description="Phosphoribosylaminoimidazole-succinocarboxamide synthase">
    <location>
        <begin position="1"/>
        <end position="367"/>
    </location>
</feature>
<accession>A8H5E7</accession>
<evidence type="ECO:0000255" key="1">
    <source>
        <dbReference type="HAMAP-Rule" id="MF_00137"/>
    </source>
</evidence>
<organism>
    <name type="scientific">Shewanella pealeana (strain ATCC 700345 / ANG-SQ1)</name>
    <dbReference type="NCBI Taxonomy" id="398579"/>
    <lineage>
        <taxon>Bacteria</taxon>
        <taxon>Pseudomonadati</taxon>
        <taxon>Pseudomonadota</taxon>
        <taxon>Gammaproteobacteria</taxon>
        <taxon>Alteromonadales</taxon>
        <taxon>Shewanellaceae</taxon>
        <taxon>Shewanella</taxon>
    </lineage>
</organism>
<dbReference type="EC" id="6.3.2.6" evidence="1"/>
<dbReference type="EMBL" id="CP000851">
    <property type="protein sequence ID" value="ABV87784.1"/>
    <property type="molecule type" value="Genomic_DNA"/>
</dbReference>
<dbReference type="RefSeq" id="WP_012155696.1">
    <property type="nucleotide sequence ID" value="NC_009901.1"/>
</dbReference>
<dbReference type="SMR" id="A8H5E7"/>
<dbReference type="STRING" id="398579.Spea_2464"/>
<dbReference type="KEGG" id="spl:Spea_2464"/>
<dbReference type="eggNOG" id="COG0152">
    <property type="taxonomic scope" value="Bacteria"/>
</dbReference>
<dbReference type="HOGENOM" id="CLU_064197_0_0_6"/>
<dbReference type="OrthoDB" id="9801549at2"/>
<dbReference type="UniPathway" id="UPA00074">
    <property type="reaction ID" value="UER00131"/>
</dbReference>
<dbReference type="Proteomes" id="UP000002608">
    <property type="component" value="Chromosome"/>
</dbReference>
<dbReference type="GO" id="GO:0005737">
    <property type="term" value="C:cytoplasm"/>
    <property type="evidence" value="ECO:0007669"/>
    <property type="project" value="TreeGrafter"/>
</dbReference>
<dbReference type="GO" id="GO:0005524">
    <property type="term" value="F:ATP binding"/>
    <property type="evidence" value="ECO:0007669"/>
    <property type="project" value="UniProtKB-KW"/>
</dbReference>
<dbReference type="GO" id="GO:0004639">
    <property type="term" value="F:phosphoribosylaminoimidazolesuccinocarboxamide synthase activity"/>
    <property type="evidence" value="ECO:0007669"/>
    <property type="project" value="UniProtKB-UniRule"/>
</dbReference>
<dbReference type="GO" id="GO:0006189">
    <property type="term" value="P:'de novo' IMP biosynthetic process"/>
    <property type="evidence" value="ECO:0007669"/>
    <property type="project" value="UniProtKB-UniRule"/>
</dbReference>
<dbReference type="CDD" id="cd01414">
    <property type="entry name" value="SAICAR_synt_Sc"/>
    <property type="match status" value="1"/>
</dbReference>
<dbReference type="Gene3D" id="3.30.470.20">
    <property type="entry name" value="ATP-grasp fold, B domain"/>
    <property type="match status" value="1"/>
</dbReference>
<dbReference type="Gene3D" id="3.30.200.20">
    <property type="entry name" value="Phosphorylase Kinase, domain 1"/>
    <property type="match status" value="1"/>
</dbReference>
<dbReference type="HAMAP" id="MF_00137">
    <property type="entry name" value="SAICAR_synth"/>
    <property type="match status" value="1"/>
</dbReference>
<dbReference type="InterPro" id="IPR028923">
    <property type="entry name" value="SAICAR_synt/ADE2_N"/>
</dbReference>
<dbReference type="InterPro" id="IPR014106">
    <property type="entry name" value="SAICAR_synthase_Vibrio-typ"/>
</dbReference>
<dbReference type="NCBIfam" id="NF010567">
    <property type="entry name" value="PRK13960.1"/>
    <property type="match status" value="1"/>
</dbReference>
<dbReference type="NCBIfam" id="TIGR02735">
    <property type="entry name" value="purC_vibrio"/>
    <property type="match status" value="1"/>
</dbReference>
<dbReference type="PANTHER" id="PTHR43700">
    <property type="entry name" value="PHOSPHORIBOSYLAMINOIMIDAZOLE-SUCCINOCARBOXAMIDE SYNTHASE"/>
    <property type="match status" value="1"/>
</dbReference>
<dbReference type="PANTHER" id="PTHR43700:SF1">
    <property type="entry name" value="PHOSPHORIBOSYLAMINOIMIDAZOLE-SUCCINOCARBOXAMIDE SYNTHASE"/>
    <property type="match status" value="1"/>
</dbReference>
<dbReference type="Pfam" id="PF01259">
    <property type="entry name" value="SAICAR_synt"/>
    <property type="match status" value="1"/>
</dbReference>
<dbReference type="SUPFAM" id="SSF56104">
    <property type="entry name" value="SAICAR synthase-like"/>
    <property type="match status" value="1"/>
</dbReference>
<keyword id="KW-0067">ATP-binding</keyword>
<keyword id="KW-0436">Ligase</keyword>
<keyword id="KW-0547">Nucleotide-binding</keyword>
<keyword id="KW-0658">Purine biosynthesis</keyword>
<keyword id="KW-1185">Reference proteome</keyword>
<name>PUR7_SHEPA</name>
<proteinExistence type="inferred from homology"/>
<protein>
    <recommendedName>
        <fullName evidence="1">Phosphoribosylaminoimidazole-succinocarboxamide synthase</fullName>
        <ecNumber evidence="1">6.3.2.6</ecNumber>
    </recommendedName>
    <alternativeName>
        <fullName evidence="1">SAICAR synthetase</fullName>
    </alternativeName>
</protein>
<sequence length="367" mass="41365">MNLADKVLVVNDNLPIRTDKPVHSGKVRSVYWLTEEDSARLIKDKGYDVPADAPLAIMVISDRISAFDCVWQGENGLNGVPGKGTALNAISNHWFKLFKDKGLADSHILDIPHPLVWIVQKARPVMIEAIARQYITGSMWRSYTKGEREFCGITIPEGLEKDQKLPELLITPSTKGVLTGLEGVPEADDVNVSRSDIERHVKGFNFSNESDIDLYEKLLKEGFDVISDALAEHDQIFVDTKFEFGYVNDAAGNEKLIYMDEVGTPDSSRIWDGSSHRDGKIIEQSKEGFRQWLLNHFPDPDILLNKNRMVERFALASDNKLPESVMMDISNTYVGIAEKIIGKKLHISDNPKQEIIDILRDEYQLIV</sequence>
<reference key="1">
    <citation type="submission" date="2007-10" db="EMBL/GenBank/DDBJ databases">
        <title>Complete sequence of Shewanella pealeana ATCC 700345.</title>
        <authorList>
            <consortium name="US DOE Joint Genome Institute"/>
            <person name="Copeland A."/>
            <person name="Lucas S."/>
            <person name="Lapidus A."/>
            <person name="Barry K."/>
            <person name="Glavina del Rio T."/>
            <person name="Dalin E."/>
            <person name="Tice H."/>
            <person name="Pitluck S."/>
            <person name="Chertkov O."/>
            <person name="Brettin T."/>
            <person name="Bruce D."/>
            <person name="Detter J.C."/>
            <person name="Han C."/>
            <person name="Schmutz J."/>
            <person name="Larimer F."/>
            <person name="Land M."/>
            <person name="Hauser L."/>
            <person name="Kyrpides N."/>
            <person name="Kim E."/>
            <person name="Zhao J.-S.Z."/>
            <person name="Manno D."/>
            <person name="Hawari J."/>
            <person name="Richardson P."/>
        </authorList>
    </citation>
    <scope>NUCLEOTIDE SEQUENCE [LARGE SCALE GENOMIC DNA]</scope>
    <source>
        <strain>ATCC 700345 / ANG-SQ1</strain>
    </source>
</reference>
<comment type="catalytic activity">
    <reaction evidence="1">
        <text>5-amino-1-(5-phospho-D-ribosyl)imidazole-4-carboxylate + L-aspartate + ATP = (2S)-2-[5-amino-1-(5-phospho-beta-D-ribosyl)imidazole-4-carboxamido]succinate + ADP + phosphate + 2 H(+)</text>
        <dbReference type="Rhea" id="RHEA:22628"/>
        <dbReference type="ChEBI" id="CHEBI:15378"/>
        <dbReference type="ChEBI" id="CHEBI:29991"/>
        <dbReference type="ChEBI" id="CHEBI:30616"/>
        <dbReference type="ChEBI" id="CHEBI:43474"/>
        <dbReference type="ChEBI" id="CHEBI:58443"/>
        <dbReference type="ChEBI" id="CHEBI:77657"/>
        <dbReference type="ChEBI" id="CHEBI:456216"/>
        <dbReference type="EC" id="6.3.2.6"/>
    </reaction>
</comment>
<comment type="pathway">
    <text evidence="1">Purine metabolism; IMP biosynthesis via de novo pathway; 5-amino-1-(5-phospho-D-ribosyl)imidazole-4-carboxamide from 5-amino-1-(5-phospho-D-ribosyl)imidazole-4-carboxylate: step 1/2.</text>
</comment>
<comment type="similarity">
    <text evidence="1">Belongs to the SAICAR synthetase family.</text>
</comment>